<protein>
    <recommendedName>
        <fullName evidence="1">Chorismate pyruvate-lyase</fullName>
        <shortName evidence="1">CL</shortName>
        <shortName evidence="1">CPL</shortName>
        <ecNumber evidence="1">4.1.3.40</ecNumber>
    </recommendedName>
</protein>
<keyword id="KW-0963">Cytoplasm</keyword>
<keyword id="KW-0456">Lyase</keyword>
<keyword id="KW-0670">Pyruvate</keyword>
<keyword id="KW-0831">Ubiquinone biosynthesis</keyword>
<proteinExistence type="inferred from homology"/>
<accession>B5Z180</accession>
<gene>
    <name evidence="1" type="primary">ubiC</name>
    <name type="ordered locus">ECH74115_5520</name>
</gene>
<sequence>MSHPALTQLRALRYCKEIPALEPQLLDWLLLEDSMTKRFEQQGKTVSVTMIREGFVEQNEIPEELPLLPKESRYWLREILLCADGEPWLAGRTVVPVSTLSGPELALQKLGKTPLGRYLFTSSTLTRDFIEIGRDAGLWGRRSRLRLSGKPLLLTELFLPASPLY</sequence>
<feature type="chain" id="PRO_1000186520" description="Chorismate pyruvate-lyase">
    <location>
        <begin position="1"/>
        <end position="165"/>
    </location>
</feature>
<feature type="binding site" evidence="1">
    <location>
        <position position="35"/>
    </location>
    <ligand>
        <name>substrate</name>
    </ligand>
</feature>
<feature type="binding site" evidence="1">
    <location>
        <position position="77"/>
    </location>
    <ligand>
        <name>substrate</name>
    </ligand>
</feature>
<feature type="binding site" evidence="1">
    <location>
        <position position="115"/>
    </location>
    <ligand>
        <name>substrate</name>
    </ligand>
</feature>
<feature type="binding site" evidence="1">
    <location>
        <position position="156"/>
    </location>
    <ligand>
        <name>substrate</name>
    </ligand>
</feature>
<organism>
    <name type="scientific">Escherichia coli O157:H7 (strain EC4115 / EHEC)</name>
    <dbReference type="NCBI Taxonomy" id="444450"/>
    <lineage>
        <taxon>Bacteria</taxon>
        <taxon>Pseudomonadati</taxon>
        <taxon>Pseudomonadota</taxon>
        <taxon>Gammaproteobacteria</taxon>
        <taxon>Enterobacterales</taxon>
        <taxon>Enterobacteriaceae</taxon>
        <taxon>Escherichia</taxon>
    </lineage>
</organism>
<name>UBIC_ECO5E</name>
<dbReference type="EC" id="4.1.3.40" evidence="1"/>
<dbReference type="EMBL" id="CP001164">
    <property type="protein sequence ID" value="ACI36327.1"/>
    <property type="molecule type" value="Genomic_DNA"/>
</dbReference>
<dbReference type="RefSeq" id="WP_001301929.1">
    <property type="nucleotide sequence ID" value="NC_011353.1"/>
</dbReference>
<dbReference type="SMR" id="B5Z180"/>
<dbReference type="KEGG" id="ecf:ECH74115_5520"/>
<dbReference type="HOGENOM" id="CLU_096824_1_0_6"/>
<dbReference type="UniPathway" id="UPA00232"/>
<dbReference type="GO" id="GO:0005829">
    <property type="term" value="C:cytosol"/>
    <property type="evidence" value="ECO:0007669"/>
    <property type="project" value="TreeGrafter"/>
</dbReference>
<dbReference type="GO" id="GO:0008813">
    <property type="term" value="F:chorismate lyase activity"/>
    <property type="evidence" value="ECO:0007669"/>
    <property type="project" value="UniProtKB-UniRule"/>
</dbReference>
<dbReference type="GO" id="GO:0042866">
    <property type="term" value="P:pyruvate biosynthetic process"/>
    <property type="evidence" value="ECO:0007669"/>
    <property type="project" value="UniProtKB-UniRule"/>
</dbReference>
<dbReference type="GO" id="GO:0006744">
    <property type="term" value="P:ubiquinone biosynthetic process"/>
    <property type="evidence" value="ECO:0007669"/>
    <property type="project" value="UniProtKB-UniRule"/>
</dbReference>
<dbReference type="FunFam" id="3.40.1410.10:FF:000002">
    <property type="entry name" value="Chorismate pyruvate-lyase"/>
    <property type="match status" value="1"/>
</dbReference>
<dbReference type="Gene3D" id="3.40.1410.10">
    <property type="entry name" value="Chorismate lyase-like"/>
    <property type="match status" value="1"/>
</dbReference>
<dbReference type="HAMAP" id="MF_01632">
    <property type="entry name" value="UbiC"/>
    <property type="match status" value="1"/>
</dbReference>
<dbReference type="InterPro" id="IPR007440">
    <property type="entry name" value="Chorismate--pyruvate_lyase"/>
</dbReference>
<dbReference type="InterPro" id="IPR028978">
    <property type="entry name" value="Chorismate_lyase_/UTRA_dom_sf"/>
</dbReference>
<dbReference type="NCBIfam" id="NF008656">
    <property type="entry name" value="PRK11655.1"/>
    <property type="match status" value="1"/>
</dbReference>
<dbReference type="PANTHER" id="PTHR38683">
    <property type="entry name" value="CHORISMATE PYRUVATE-LYASE"/>
    <property type="match status" value="1"/>
</dbReference>
<dbReference type="PANTHER" id="PTHR38683:SF1">
    <property type="entry name" value="CHORISMATE PYRUVATE-LYASE"/>
    <property type="match status" value="1"/>
</dbReference>
<dbReference type="Pfam" id="PF04345">
    <property type="entry name" value="Chor_lyase"/>
    <property type="match status" value="1"/>
</dbReference>
<dbReference type="SUPFAM" id="SSF64288">
    <property type="entry name" value="Chorismate lyase-like"/>
    <property type="match status" value="1"/>
</dbReference>
<evidence type="ECO:0000255" key="1">
    <source>
        <dbReference type="HAMAP-Rule" id="MF_01632"/>
    </source>
</evidence>
<comment type="function">
    <text evidence="1">Removes the pyruvyl group from chorismate, with concomitant aromatization of the ring, to provide 4-hydroxybenzoate (4HB) for the ubiquinone pathway.</text>
</comment>
<comment type="catalytic activity">
    <reaction evidence="1">
        <text>chorismate = 4-hydroxybenzoate + pyruvate</text>
        <dbReference type="Rhea" id="RHEA:16505"/>
        <dbReference type="ChEBI" id="CHEBI:15361"/>
        <dbReference type="ChEBI" id="CHEBI:17879"/>
        <dbReference type="ChEBI" id="CHEBI:29748"/>
        <dbReference type="EC" id="4.1.3.40"/>
    </reaction>
</comment>
<comment type="pathway">
    <text evidence="1">Cofactor biosynthesis; ubiquinone biosynthesis.</text>
</comment>
<comment type="subunit">
    <text evidence="1">Monomer.</text>
</comment>
<comment type="subcellular location">
    <subcellularLocation>
        <location evidence="1">Cytoplasm</location>
    </subcellularLocation>
</comment>
<comment type="similarity">
    <text evidence="1">Belongs to the UbiC family.</text>
</comment>
<reference key="1">
    <citation type="journal article" date="2011" name="Proc. Natl. Acad. Sci. U.S.A.">
        <title>Genomic anatomy of Escherichia coli O157:H7 outbreaks.</title>
        <authorList>
            <person name="Eppinger M."/>
            <person name="Mammel M.K."/>
            <person name="Leclerc J.E."/>
            <person name="Ravel J."/>
            <person name="Cebula T.A."/>
        </authorList>
    </citation>
    <scope>NUCLEOTIDE SEQUENCE [LARGE SCALE GENOMIC DNA]</scope>
    <source>
        <strain>EC4115 / EHEC</strain>
    </source>
</reference>